<proteinExistence type="inferred from homology"/>
<reference key="1">
    <citation type="submission" date="2009-10" db="EMBL/GenBank/DDBJ databases">
        <title>The complete chromosome of Gordonia bronchialis DSM 43247.</title>
        <authorList>
            <consortium name="US DOE Joint Genome Institute (JGI-PGF)"/>
            <person name="Lucas S."/>
            <person name="Copeland A."/>
            <person name="Lapidus A."/>
            <person name="Glavina del Rio T."/>
            <person name="Dalin E."/>
            <person name="Tice H."/>
            <person name="Bruce D."/>
            <person name="Goodwin L."/>
            <person name="Pitluck S."/>
            <person name="Kyrpides N."/>
            <person name="Mavromatis K."/>
            <person name="Ivanova N."/>
            <person name="Ovchinnikova G."/>
            <person name="Saunders E."/>
            <person name="Brettin T."/>
            <person name="Detter J.C."/>
            <person name="Han C."/>
            <person name="Larimer F."/>
            <person name="Land M."/>
            <person name="Hauser L."/>
            <person name="Markowitz V."/>
            <person name="Cheng J.-F."/>
            <person name="Hugenholtz P."/>
            <person name="Woyke T."/>
            <person name="Wu D."/>
            <person name="Jando M."/>
            <person name="Schneider S."/>
            <person name="Goeker M."/>
            <person name="Klenk H.-P."/>
            <person name="Eisen J.A."/>
        </authorList>
    </citation>
    <scope>NUCLEOTIDE SEQUENCE [LARGE SCALE GENOMIC DNA]</scope>
    <source>
        <strain>ATCC 25592 / DSM 43247 / BCRC 13721 / JCM 3198 / KCTC 3076 / NBRC 16047 / NCTC 10667</strain>
    </source>
</reference>
<evidence type="ECO:0000255" key="1">
    <source>
        <dbReference type="HAMAP-Rule" id="MF_02123"/>
    </source>
</evidence>
<gene>
    <name evidence="1" type="primary">fgd</name>
    <name type="ordered locus">Gbro_4404</name>
</gene>
<organism>
    <name type="scientific">Gordonia bronchialis (strain ATCC 25592 / DSM 43247 / BCRC 13721 / JCM 3198 / KCTC 3076 / NBRC 16047 / NCTC 10667)</name>
    <name type="common">Rhodococcus bronchialis</name>
    <dbReference type="NCBI Taxonomy" id="526226"/>
    <lineage>
        <taxon>Bacteria</taxon>
        <taxon>Bacillati</taxon>
        <taxon>Actinomycetota</taxon>
        <taxon>Actinomycetes</taxon>
        <taxon>Mycobacteriales</taxon>
        <taxon>Gordoniaceae</taxon>
        <taxon>Gordonia</taxon>
    </lineage>
</organism>
<dbReference type="EC" id="1.1.98.2" evidence="1"/>
<dbReference type="EMBL" id="CP001802">
    <property type="protein sequence ID" value="ACY23544.1"/>
    <property type="molecule type" value="Genomic_DNA"/>
</dbReference>
<dbReference type="RefSeq" id="WP_012836033.1">
    <property type="nucleotide sequence ID" value="NC_013441.1"/>
</dbReference>
<dbReference type="SMR" id="D0L658"/>
<dbReference type="STRING" id="526226.Gbro_4404"/>
<dbReference type="KEGG" id="gbr:Gbro_4404"/>
<dbReference type="eggNOG" id="COG2141">
    <property type="taxonomic scope" value="Bacteria"/>
</dbReference>
<dbReference type="HOGENOM" id="CLU_027853_4_0_11"/>
<dbReference type="OrthoDB" id="180193at2"/>
<dbReference type="Proteomes" id="UP000001219">
    <property type="component" value="Chromosome"/>
</dbReference>
<dbReference type="GO" id="GO:0070967">
    <property type="term" value="F:coenzyme F420 binding"/>
    <property type="evidence" value="ECO:0007669"/>
    <property type="project" value="UniProtKB-UniRule"/>
</dbReference>
<dbReference type="GO" id="GO:0052749">
    <property type="term" value="F:glucose-6-phosphate dehydrogenase (coenzyme F420) activity"/>
    <property type="evidence" value="ECO:0007669"/>
    <property type="project" value="UniProtKB-EC"/>
</dbReference>
<dbReference type="GO" id="GO:0016705">
    <property type="term" value="F:oxidoreductase activity, acting on paired donors, with incorporation or reduction of molecular oxygen"/>
    <property type="evidence" value="ECO:0007669"/>
    <property type="project" value="InterPro"/>
</dbReference>
<dbReference type="GO" id="GO:0005975">
    <property type="term" value="P:carbohydrate metabolic process"/>
    <property type="evidence" value="ECO:0007669"/>
    <property type="project" value="UniProtKB-UniRule"/>
</dbReference>
<dbReference type="CDD" id="cd01097">
    <property type="entry name" value="Tetrahydromethanopterin_reductase"/>
    <property type="match status" value="1"/>
</dbReference>
<dbReference type="Gene3D" id="3.20.20.30">
    <property type="entry name" value="Luciferase-like domain"/>
    <property type="match status" value="1"/>
</dbReference>
<dbReference type="HAMAP" id="MF_02123">
    <property type="entry name" value="F420_G6P_DH"/>
    <property type="match status" value="1"/>
</dbReference>
<dbReference type="InterPro" id="IPR019944">
    <property type="entry name" value="F420-dep_G6P_DH"/>
</dbReference>
<dbReference type="InterPro" id="IPR050564">
    <property type="entry name" value="F420-G6PD/mer"/>
</dbReference>
<dbReference type="InterPro" id="IPR019945">
    <property type="entry name" value="F420_G6P_DH-rel"/>
</dbReference>
<dbReference type="InterPro" id="IPR011251">
    <property type="entry name" value="Luciferase-like_dom"/>
</dbReference>
<dbReference type="InterPro" id="IPR036661">
    <property type="entry name" value="Luciferase-like_sf"/>
</dbReference>
<dbReference type="NCBIfam" id="TIGR03554">
    <property type="entry name" value="F420_G6P_DH"/>
    <property type="match status" value="1"/>
</dbReference>
<dbReference type="NCBIfam" id="TIGR03557">
    <property type="entry name" value="F420_G6P_family"/>
    <property type="match status" value="1"/>
</dbReference>
<dbReference type="PANTHER" id="PTHR43244">
    <property type="match status" value="1"/>
</dbReference>
<dbReference type="PANTHER" id="PTHR43244:SF1">
    <property type="entry name" value="5,10-METHYLENETETRAHYDROMETHANOPTERIN REDUCTASE"/>
    <property type="match status" value="1"/>
</dbReference>
<dbReference type="Pfam" id="PF00296">
    <property type="entry name" value="Bac_luciferase"/>
    <property type="match status" value="1"/>
</dbReference>
<dbReference type="SUPFAM" id="SSF51679">
    <property type="entry name" value="Bacterial luciferase-like"/>
    <property type="match status" value="1"/>
</dbReference>
<sequence>MAQELKLGFKASAEQFDPRELVEIAVAAEEHGMDSVAVSDHFQPWRHNGGHAPFSLAWMAAVGERTKRVQIGTSVMTPTFRYNPAVIAQAFASMGCMYPGRIMLGVGTGEALNEYAAGFQGEWPEFKERFARLREAIRLMRELWTGDEVNFDGEYYHTQGAYMYDVPEQPIPVYVAAGGPVVARYAGRAGDGFICTSGKGADLYQEKLIPAVKEGAEKAERDFEAIDRMIEIKISYDPDPQLALENTRFWAPLSLTPEQKHSVNSSTEMERLADELPIEQVAKRWIVASDPDEAVEKVKFYTDCGLNHLVFHAPGHDQRRFLENFEKDLAPRLRKLSV</sequence>
<protein>
    <recommendedName>
        <fullName evidence="1">F420-dependent glucose-6-phosphate dehydrogenase</fullName>
        <shortName evidence="1">FGD</shortName>
        <shortName evidence="1">G6PD</shortName>
        <ecNumber evidence="1">1.1.98.2</ecNumber>
    </recommendedName>
</protein>
<keyword id="KW-0119">Carbohydrate metabolism</keyword>
<keyword id="KW-0560">Oxidoreductase</keyword>
<keyword id="KW-1185">Reference proteome</keyword>
<feature type="chain" id="PRO_0000413586" description="F420-dependent glucose-6-phosphate dehydrogenase">
    <location>
        <begin position="1"/>
        <end position="338"/>
    </location>
</feature>
<feature type="active site" description="Proton donor" evidence="1">
    <location>
        <position position="41"/>
    </location>
</feature>
<feature type="active site" description="Proton acceptor" evidence="1">
    <location>
        <position position="110"/>
    </location>
</feature>
<feature type="binding site" evidence="1">
    <location>
        <position position="40"/>
    </location>
    <ligand>
        <name>coenzyme F420-(gamma-Glu)n</name>
        <dbReference type="ChEBI" id="CHEBI:133980"/>
    </ligand>
</feature>
<feature type="binding site" evidence="1">
    <location>
        <position position="77"/>
    </location>
    <ligand>
        <name>coenzyme F420-(gamma-Glu)n</name>
        <dbReference type="ChEBI" id="CHEBI:133980"/>
    </ligand>
</feature>
<feature type="binding site" evidence="1">
    <location>
        <begin position="108"/>
        <end position="109"/>
    </location>
    <ligand>
        <name>coenzyme F420-(gamma-Glu)n</name>
        <dbReference type="ChEBI" id="CHEBI:133980"/>
    </ligand>
</feature>
<feature type="binding site" evidence="1">
    <location>
        <position position="113"/>
    </location>
    <ligand>
        <name>coenzyme F420-(gamma-Glu)n</name>
        <dbReference type="ChEBI" id="CHEBI:133980"/>
    </ligand>
</feature>
<feature type="binding site" evidence="1">
    <location>
        <begin position="178"/>
        <end position="179"/>
    </location>
    <ligand>
        <name>coenzyme F420-(gamma-Glu)n</name>
        <dbReference type="ChEBI" id="CHEBI:133980"/>
    </ligand>
</feature>
<feature type="binding site" evidence="1">
    <location>
        <begin position="181"/>
        <end position="182"/>
    </location>
    <ligand>
        <name>coenzyme F420-(gamma-Glu)n</name>
        <dbReference type="ChEBI" id="CHEBI:133980"/>
    </ligand>
</feature>
<feature type="binding site" evidence="1">
    <location>
        <position position="196"/>
    </location>
    <ligand>
        <name>substrate</name>
    </ligand>
</feature>
<feature type="binding site" evidence="1">
    <location>
        <position position="199"/>
    </location>
    <ligand>
        <name>substrate</name>
    </ligand>
</feature>
<feature type="binding site" evidence="1">
    <location>
        <position position="260"/>
    </location>
    <ligand>
        <name>substrate</name>
    </ligand>
</feature>
<feature type="binding site" evidence="1">
    <location>
        <position position="284"/>
    </location>
    <ligand>
        <name>substrate</name>
    </ligand>
</feature>
<accession>D0L658</accession>
<comment type="function">
    <text evidence="1">Catalyzes the coenzyme F420-dependent oxidation of glucose 6-phosphate (G6P) to 6-phosphogluconolactone.</text>
</comment>
<comment type="catalytic activity">
    <reaction evidence="1">
        <text>oxidized coenzyme F420-(gamma-L-Glu)(n) + D-glucose 6-phosphate + H(+) = 6-phospho-D-glucono-1,5-lactone + reduced coenzyme F420-(gamma-L-Glu)(n)</text>
        <dbReference type="Rhea" id="RHEA:27294"/>
        <dbReference type="Rhea" id="RHEA-COMP:12939"/>
        <dbReference type="Rhea" id="RHEA-COMP:14378"/>
        <dbReference type="ChEBI" id="CHEBI:15378"/>
        <dbReference type="ChEBI" id="CHEBI:57955"/>
        <dbReference type="ChEBI" id="CHEBI:61548"/>
        <dbReference type="ChEBI" id="CHEBI:133980"/>
        <dbReference type="ChEBI" id="CHEBI:139511"/>
        <dbReference type="EC" id="1.1.98.2"/>
    </reaction>
</comment>
<comment type="subunit">
    <text evidence="1">Homodimer.</text>
</comment>
<comment type="similarity">
    <text evidence="1">Belongs to the F420-dependent glucose-6-phosphate dehydrogenase family.</text>
</comment>
<name>FGD_GORB4</name>